<proteinExistence type="evidence at protein level"/>
<reference key="1">
    <citation type="journal article" date="1999" name="Nature">
        <title>Sequence and analysis of chromosome 2 of the plant Arabidopsis thaliana.</title>
        <authorList>
            <person name="Lin X."/>
            <person name="Kaul S."/>
            <person name="Rounsley S.D."/>
            <person name="Shea T.P."/>
            <person name="Benito M.-I."/>
            <person name="Town C.D."/>
            <person name="Fujii C.Y."/>
            <person name="Mason T.M."/>
            <person name="Bowman C.L."/>
            <person name="Barnstead M.E."/>
            <person name="Feldblyum T.V."/>
            <person name="Buell C.R."/>
            <person name="Ketchum K.A."/>
            <person name="Lee J.J."/>
            <person name="Ronning C.M."/>
            <person name="Koo H.L."/>
            <person name="Moffat K.S."/>
            <person name="Cronin L.A."/>
            <person name="Shen M."/>
            <person name="Pai G."/>
            <person name="Van Aken S."/>
            <person name="Umayam L."/>
            <person name="Tallon L.J."/>
            <person name="Gill J.E."/>
            <person name="Adams M.D."/>
            <person name="Carrera A.J."/>
            <person name="Creasy T.H."/>
            <person name="Goodman H.M."/>
            <person name="Somerville C.R."/>
            <person name="Copenhaver G.P."/>
            <person name="Preuss D."/>
            <person name="Nierman W.C."/>
            <person name="White O."/>
            <person name="Eisen J.A."/>
            <person name="Salzberg S.L."/>
            <person name="Fraser C.M."/>
            <person name="Venter J.C."/>
        </authorList>
    </citation>
    <scope>NUCLEOTIDE SEQUENCE [LARGE SCALE GENOMIC DNA]</scope>
    <source>
        <strain>cv. Columbia</strain>
    </source>
</reference>
<reference key="2">
    <citation type="journal article" date="2017" name="Plant J.">
        <title>Araport11: a complete reannotation of the Arabidopsis thaliana reference genome.</title>
        <authorList>
            <person name="Cheng C.Y."/>
            <person name="Krishnakumar V."/>
            <person name="Chan A.P."/>
            <person name="Thibaud-Nissen F."/>
            <person name="Schobel S."/>
            <person name="Town C.D."/>
        </authorList>
    </citation>
    <scope>GENOME REANNOTATION</scope>
    <source>
        <strain>cv. Columbia</strain>
    </source>
</reference>
<reference key="3">
    <citation type="journal article" date="2002" name="Science">
        <title>Functional annotation of a full-length Arabidopsis cDNA collection.</title>
        <authorList>
            <person name="Seki M."/>
            <person name="Narusaka M."/>
            <person name="Kamiya A."/>
            <person name="Ishida J."/>
            <person name="Satou M."/>
            <person name="Sakurai T."/>
            <person name="Nakajima M."/>
            <person name="Enju A."/>
            <person name="Akiyama K."/>
            <person name="Oono Y."/>
            <person name="Muramatsu M."/>
            <person name="Hayashizaki Y."/>
            <person name="Kawai J."/>
            <person name="Carninci P."/>
            <person name="Itoh M."/>
            <person name="Ishii Y."/>
            <person name="Arakawa T."/>
            <person name="Shibata K."/>
            <person name="Shinagawa A."/>
            <person name="Shinozaki K."/>
        </authorList>
    </citation>
    <scope>NUCLEOTIDE SEQUENCE [LARGE SCALE MRNA]</scope>
    <source>
        <strain>cv. Columbia</strain>
    </source>
</reference>
<reference key="4">
    <citation type="journal article" date="2003" name="Science">
        <title>Empirical analysis of transcriptional activity in the Arabidopsis genome.</title>
        <authorList>
            <person name="Yamada K."/>
            <person name="Lim J."/>
            <person name="Dale J.M."/>
            <person name="Chen H."/>
            <person name="Shinn P."/>
            <person name="Palm C.J."/>
            <person name="Southwick A.M."/>
            <person name="Wu H.C."/>
            <person name="Kim C.J."/>
            <person name="Nguyen M."/>
            <person name="Pham P.K."/>
            <person name="Cheuk R.F."/>
            <person name="Karlin-Newmann G."/>
            <person name="Liu S.X."/>
            <person name="Lam B."/>
            <person name="Sakano H."/>
            <person name="Wu T."/>
            <person name="Yu G."/>
            <person name="Miranda M."/>
            <person name="Quach H.L."/>
            <person name="Tripp M."/>
            <person name="Chang C.H."/>
            <person name="Lee J.M."/>
            <person name="Toriumi M.J."/>
            <person name="Chan M.M."/>
            <person name="Tang C.C."/>
            <person name="Onodera C.S."/>
            <person name="Deng J.M."/>
            <person name="Akiyama K."/>
            <person name="Ansari Y."/>
            <person name="Arakawa T."/>
            <person name="Banh J."/>
            <person name="Banno F."/>
            <person name="Bowser L."/>
            <person name="Brooks S.Y."/>
            <person name="Carninci P."/>
            <person name="Chao Q."/>
            <person name="Choy N."/>
            <person name="Enju A."/>
            <person name="Goldsmith A.D."/>
            <person name="Gurjal M."/>
            <person name="Hansen N.F."/>
            <person name="Hayashizaki Y."/>
            <person name="Johnson-Hopson C."/>
            <person name="Hsuan V.W."/>
            <person name="Iida K."/>
            <person name="Karnes M."/>
            <person name="Khan S."/>
            <person name="Koesema E."/>
            <person name="Ishida J."/>
            <person name="Jiang P.X."/>
            <person name="Jones T."/>
            <person name="Kawai J."/>
            <person name="Kamiya A."/>
            <person name="Meyers C."/>
            <person name="Nakajima M."/>
            <person name="Narusaka M."/>
            <person name="Seki M."/>
            <person name="Sakurai T."/>
            <person name="Satou M."/>
            <person name="Tamse R."/>
            <person name="Vaysberg M."/>
            <person name="Wallender E.K."/>
            <person name="Wong C."/>
            <person name="Yamamura Y."/>
            <person name="Yuan S."/>
            <person name="Shinozaki K."/>
            <person name="Davis R.W."/>
            <person name="Theologis A."/>
            <person name="Ecker J.R."/>
        </authorList>
    </citation>
    <scope>NUCLEOTIDE SEQUENCE [LARGE SCALE MRNA]</scope>
    <source>
        <strain>cv. Columbia</strain>
    </source>
</reference>
<reference key="5">
    <citation type="journal article" date="2003" name="Plant Cell">
        <title>The Arabidopsis anaphase-promoting complex or cyclosome: molecular and genetic characterization of the APC2 subunit.</title>
        <authorList>
            <person name="Capron A."/>
            <person name="Serralbo O."/>
            <person name="Fulop K."/>
            <person name="Frugier F."/>
            <person name="Parmentier Y."/>
            <person name="Dong A."/>
            <person name="Lecureuil A."/>
            <person name="Guerche P."/>
            <person name="Kondorosi E."/>
            <person name="Scheres B."/>
            <person name="Genschik P."/>
        </authorList>
    </citation>
    <scope>FUNCTION</scope>
    <scope>INTERACTION WITH APC8 AND APC11</scope>
    <scope>SUBCELLULAR LOCATION</scope>
    <scope>TISSUE SPECIFICITY</scope>
    <scope>DISRUPTION PHENOTYPE</scope>
</reference>
<reference key="6">
    <citation type="journal article" date="2008" name="Plant J.">
        <title>Specialization of CDC27 function in the Arabidopsis thaliana anaphase-promoting complex (APC/C).</title>
        <authorList>
            <person name="Perez-Perez J.M."/>
            <person name="Serralbo O."/>
            <person name="Vanstraelen M."/>
            <person name="Gonzalez C."/>
            <person name="Criqui M.C."/>
            <person name="Genschik P."/>
            <person name="Kondorosi E."/>
            <person name="Scheres B."/>
        </authorList>
    </citation>
    <scope>INTERACTION WITH CDC27A AND CDC27B</scope>
</reference>
<organism>
    <name type="scientific">Arabidopsis thaliana</name>
    <name type="common">Mouse-ear cress</name>
    <dbReference type="NCBI Taxonomy" id="3702"/>
    <lineage>
        <taxon>Eukaryota</taxon>
        <taxon>Viridiplantae</taxon>
        <taxon>Streptophyta</taxon>
        <taxon>Embryophyta</taxon>
        <taxon>Tracheophyta</taxon>
        <taxon>Spermatophyta</taxon>
        <taxon>Magnoliopsida</taxon>
        <taxon>eudicotyledons</taxon>
        <taxon>Gunneridae</taxon>
        <taxon>Pentapetalae</taxon>
        <taxon>rosids</taxon>
        <taxon>malvids</taxon>
        <taxon>Brassicales</taxon>
        <taxon>Brassicaceae</taxon>
        <taxon>Camelineae</taxon>
        <taxon>Arabidopsis</taxon>
    </lineage>
</organism>
<feature type="chain" id="PRO_0000396838" description="Anaphase-promoting complex subunit 2">
    <location>
        <begin position="1"/>
        <end position="865"/>
    </location>
</feature>
<feature type="sequence conflict" description="In Ref. 3; BAC43061." evidence="4" ref="3">
    <original>V</original>
    <variation>A</variation>
    <location>
        <position position="247"/>
    </location>
</feature>
<dbReference type="EMBL" id="AC006955">
    <property type="protein sequence ID" value="AAD22340.1"/>
    <property type="status" value="ALT_SEQ"/>
    <property type="molecule type" value="Genomic_DNA"/>
</dbReference>
<dbReference type="EMBL" id="CP002685">
    <property type="protein sequence ID" value="AEC05853.1"/>
    <property type="molecule type" value="Genomic_DNA"/>
</dbReference>
<dbReference type="EMBL" id="AK118453">
    <property type="protein sequence ID" value="BAC43061.1"/>
    <property type="molecule type" value="mRNA"/>
</dbReference>
<dbReference type="EMBL" id="AY138228">
    <property type="protein sequence ID" value="AAN10196.1"/>
    <property type="molecule type" value="mRNA"/>
</dbReference>
<dbReference type="PIR" id="H84459">
    <property type="entry name" value="H84459"/>
</dbReference>
<dbReference type="RefSeq" id="NP_178543.2">
    <property type="nucleotide sequence ID" value="NM_126495.3"/>
</dbReference>
<dbReference type="SMR" id="Q8H1U5"/>
<dbReference type="BioGRID" id="409">
    <property type="interactions" value="18"/>
</dbReference>
<dbReference type="FunCoup" id="Q8H1U5">
    <property type="interactions" value="3765"/>
</dbReference>
<dbReference type="IntAct" id="Q8H1U5">
    <property type="interactions" value="19"/>
</dbReference>
<dbReference type="STRING" id="3702.Q8H1U5"/>
<dbReference type="PaxDb" id="3702-AT2G04660.1"/>
<dbReference type="ProteomicsDB" id="244486"/>
<dbReference type="EnsemblPlants" id="AT2G04660.1">
    <property type="protein sequence ID" value="AT2G04660.1"/>
    <property type="gene ID" value="AT2G04660"/>
</dbReference>
<dbReference type="GeneID" id="815008"/>
<dbReference type="Gramene" id="AT2G04660.1">
    <property type="protein sequence ID" value="AT2G04660.1"/>
    <property type="gene ID" value="AT2G04660"/>
</dbReference>
<dbReference type="KEGG" id="ath:AT2G04660"/>
<dbReference type="Araport" id="AT2G04660"/>
<dbReference type="TAIR" id="AT2G04660">
    <property type="gene designation" value="APC2"/>
</dbReference>
<dbReference type="eggNOG" id="KOG2165">
    <property type="taxonomic scope" value="Eukaryota"/>
</dbReference>
<dbReference type="HOGENOM" id="CLU_007149_4_2_1"/>
<dbReference type="InParanoid" id="Q8H1U5"/>
<dbReference type="OMA" id="RFWRHFE"/>
<dbReference type="OrthoDB" id="5581181at2759"/>
<dbReference type="PhylomeDB" id="Q8H1U5"/>
<dbReference type="UniPathway" id="UPA00143"/>
<dbReference type="PRO" id="PR:Q8H1U5"/>
<dbReference type="Proteomes" id="UP000006548">
    <property type="component" value="Chromosome 2"/>
</dbReference>
<dbReference type="ExpressionAtlas" id="Q8H1U5">
    <property type="expression patterns" value="baseline and differential"/>
</dbReference>
<dbReference type="GO" id="GO:0005634">
    <property type="term" value="C:nucleus"/>
    <property type="evidence" value="ECO:0000314"/>
    <property type="project" value="UniProtKB"/>
</dbReference>
<dbReference type="GO" id="GO:0005819">
    <property type="term" value="C:spindle"/>
    <property type="evidence" value="ECO:0000314"/>
    <property type="project" value="UniProtKB"/>
</dbReference>
<dbReference type="GO" id="GO:0031625">
    <property type="term" value="F:ubiquitin protein ligase binding"/>
    <property type="evidence" value="ECO:0007669"/>
    <property type="project" value="InterPro"/>
</dbReference>
<dbReference type="GO" id="GO:0051301">
    <property type="term" value="P:cell division"/>
    <property type="evidence" value="ECO:0007669"/>
    <property type="project" value="UniProtKB-KW"/>
</dbReference>
<dbReference type="GO" id="GO:0009561">
    <property type="term" value="P:megagametogenesis"/>
    <property type="evidence" value="ECO:0000315"/>
    <property type="project" value="UniProtKB"/>
</dbReference>
<dbReference type="GO" id="GO:0016567">
    <property type="term" value="P:protein ubiquitination"/>
    <property type="evidence" value="ECO:0007669"/>
    <property type="project" value="UniProtKB-UniPathway"/>
</dbReference>
<dbReference type="GO" id="GO:0006511">
    <property type="term" value="P:ubiquitin-dependent protein catabolic process"/>
    <property type="evidence" value="ECO:0007669"/>
    <property type="project" value="InterPro"/>
</dbReference>
<dbReference type="FunFam" id="1.10.10.10:FF:000331">
    <property type="entry name" value="Anaphase-promoting complex subunit 2"/>
    <property type="match status" value="1"/>
</dbReference>
<dbReference type="FunFam" id="1.20.1310.10:FF:000032">
    <property type="entry name" value="Anaphase-promoting complex subunit 2"/>
    <property type="match status" value="1"/>
</dbReference>
<dbReference type="Gene3D" id="1.20.1310.10">
    <property type="entry name" value="Cullin Repeats"/>
    <property type="match status" value="1"/>
</dbReference>
<dbReference type="Gene3D" id="3.30.230.130">
    <property type="entry name" value="Cullin, Chain C, Domain 2"/>
    <property type="match status" value="1"/>
</dbReference>
<dbReference type="Gene3D" id="1.10.10.10">
    <property type="entry name" value="Winged helix-like DNA-binding domain superfamily/Winged helix DNA-binding domain"/>
    <property type="match status" value="1"/>
</dbReference>
<dbReference type="InterPro" id="IPR044554">
    <property type="entry name" value="APC2-like"/>
</dbReference>
<dbReference type="InterPro" id="IPR014786">
    <property type="entry name" value="APC2_C"/>
</dbReference>
<dbReference type="InterPro" id="IPR016158">
    <property type="entry name" value="Cullin_homology"/>
</dbReference>
<dbReference type="InterPro" id="IPR036317">
    <property type="entry name" value="Cullin_homology_sf"/>
</dbReference>
<dbReference type="InterPro" id="IPR001373">
    <property type="entry name" value="Cullin_N"/>
</dbReference>
<dbReference type="InterPro" id="IPR036388">
    <property type="entry name" value="WH-like_DNA-bd_sf"/>
</dbReference>
<dbReference type="InterPro" id="IPR036390">
    <property type="entry name" value="WH_DNA-bd_sf"/>
</dbReference>
<dbReference type="PANTHER" id="PTHR45957">
    <property type="entry name" value="ANAPHASE-PROMOTING COMPLEX SUBUNIT 2"/>
    <property type="match status" value="1"/>
</dbReference>
<dbReference type="PANTHER" id="PTHR45957:SF1">
    <property type="entry name" value="ANAPHASE-PROMOTING COMPLEX SUBUNIT 2"/>
    <property type="match status" value="1"/>
</dbReference>
<dbReference type="Pfam" id="PF08672">
    <property type="entry name" value="ANAPC2"/>
    <property type="match status" value="1"/>
</dbReference>
<dbReference type="Pfam" id="PF00888">
    <property type="entry name" value="Cullin"/>
    <property type="match status" value="1"/>
</dbReference>
<dbReference type="SMART" id="SM01013">
    <property type="entry name" value="APC2"/>
    <property type="match status" value="1"/>
</dbReference>
<dbReference type="SMART" id="SM00182">
    <property type="entry name" value="CULLIN"/>
    <property type="match status" value="1"/>
</dbReference>
<dbReference type="SUPFAM" id="SSF75632">
    <property type="entry name" value="Cullin homology domain"/>
    <property type="match status" value="1"/>
</dbReference>
<dbReference type="SUPFAM" id="SSF46785">
    <property type="entry name" value="Winged helix' DNA-binding domain"/>
    <property type="match status" value="1"/>
</dbReference>
<dbReference type="PROSITE" id="PS50069">
    <property type="entry name" value="CULLIN_2"/>
    <property type="match status" value="1"/>
</dbReference>
<gene>
    <name type="primary">APC2</name>
    <name type="ordered locus">At2g04660</name>
    <name type="ORF">F28I8.30</name>
</gene>
<name>APC2_ARATH</name>
<evidence type="ECO:0000255" key="1">
    <source>
        <dbReference type="PROSITE-ProRule" id="PRU00330"/>
    </source>
</evidence>
<evidence type="ECO:0000269" key="2">
    <source>
    </source>
</evidence>
<evidence type="ECO:0000269" key="3">
    <source>
    </source>
</evidence>
<evidence type="ECO:0000305" key="4"/>
<accession>Q8H1U5</accession>
<accession>Q8GX39</accession>
<accession>Q9SJ93</accession>
<keyword id="KW-0131">Cell cycle</keyword>
<keyword id="KW-0132">Cell division</keyword>
<keyword id="KW-0498">Mitosis</keyword>
<keyword id="KW-0539">Nucleus</keyword>
<keyword id="KW-1185">Reference proteome</keyword>
<keyword id="KW-0833">Ubl conjugation pathway</keyword>
<comment type="function">
    <text evidence="2">Component of the anaphase promoting complex/cyclosome (APC/C), a cell cycle-regulated E3 ubiquitin-protein ligase complex that controls progression through mitosis and the G1 phase of the cell cycle. The APC/C complex controls several key steps in the cell cycle by mediating ubiquitination and subsequent degradation of target proteins such as cyclins. The APC/C complex is required for the female gametophyte development and is involved in several aspect of development by controlling cell division and cell elongation. Involved in the control of endoreduplication.</text>
</comment>
<comment type="pathway">
    <text>Protein modification; protein ubiquitination.</text>
</comment>
<comment type="subunit">
    <text evidence="2 3">The APC/C is composed of at least 10 subunits. Interacts with APC8, APC11, CDC27A and CDC27B.</text>
</comment>
<comment type="interaction">
    <interactant intactId="EBI-1749410">
        <id>Q8H1U5</id>
    </interactant>
    <interactant intactId="EBI-2130744">
        <id>Q9M9L0</id>
        <label>APC11</label>
    </interactant>
    <organismsDiffer>false</organismsDiffer>
    <experiments>4</experiments>
</comment>
<comment type="interaction">
    <interactant intactId="EBI-1749410">
        <id>Q8H1U5</id>
    </interactant>
    <interactant intactId="EBI-2130714">
        <id>Q9STS3</id>
        <label>APC8</label>
    </interactant>
    <organismsDiffer>false</organismsDiffer>
    <experiments>3</experiments>
</comment>
<comment type="interaction">
    <interactant intactId="EBI-1749410">
        <id>Q8H1U5</id>
    </interactant>
    <interactant intactId="EBI-1749373">
        <id>Q06AN9</id>
        <label>CDC27A</label>
    </interactant>
    <organismsDiffer>false</organismsDiffer>
    <experiments>2</experiments>
</comment>
<comment type="interaction">
    <interactant intactId="EBI-1749410">
        <id>Q8H1U5</id>
    </interactant>
    <interactant intactId="EBI-1668733">
        <id>Q8LGU6</id>
        <label>CDC27B</label>
    </interactant>
    <organismsDiffer>false</organismsDiffer>
    <experiments>3</experiments>
</comment>
<comment type="subcellular location">
    <subcellularLocation>
        <location evidence="2">Nucleus</location>
    </subcellularLocation>
</comment>
<comment type="tissue specificity">
    <text evidence="2">Highly expressed in immature flowers. Expressed in stems, leaves and flowers.</text>
</comment>
<comment type="disruption phenotype">
    <text evidence="2">Gametophytic lethal phenotype.</text>
</comment>
<comment type="similarity">
    <text evidence="1">Belongs to the cullin family.</text>
</comment>
<comment type="sequence caution" evidence="4">
    <conflict type="erroneous gene model prediction">
        <sequence resource="EMBL-CDS" id="AAD22340"/>
    </conflict>
</comment>
<sequence>MEALGSSDCNLEILETLSDDAIQEITESYDGFFTTVESLIAGTGDSLVEDEFVSHVYCLCKYGLDSLVRDHFLRSLEQAFEKGGASSFWQHFDAYSEKKHHNYGEEIQIVLCKALEEISIEKQYHEKCLSIVVHALQSFKEQSSDDRQNSDTERVHLFSRFQSMLSSTLMTTLPQHFPEILHWYFKERLEELSAIMDGDGIEEQEDDCMDLDEKLRYKNGEMDVDEGCSQGKRLGHDKLVKNIGKVVRDLRSIGFTSMAENAYASAIFLLLKAKVHDLAGDDYRTSVLESIKEWIQTVPLQFLNALLSYLGDSVSYGTTSSGLTSPLACCPSPSFSRVVTPSEGIVRWKLRLEYFAYETLQDLRIAKLFEIIVDYPESSPAIEDLKQCLEYTGQHSKLVESFISSLKYRLLTAGASTNDILHQYVSTIKALRAIDPAGVFLEAVGEPIRDYLRGRKDTIKCIVTMLTDGSGGNANGSGNPGDSLLEELMRDEESQENVGFDDDFHTDDKQAWINASRWEPDPVEADPLKGSLSQRKVDILGMLVDIIGSKEQLVNEYRVMLAEKLLNKTDYDIDTEIRTVELLKIHFGEASMQRCEIMLNDLIDSKRVNTNIKKASQTGAELRENELSVDTLTSTILSTNFWPPIQDEPLELPGPVDKLLSDYANRYHEIKTPRKLLWKKNLGTVKLELQFEDRAMQFTVSPTHAAIIMQFQEKKSWTYKDLAEVIGIPIDALNRRVNFWISKGVLRESTGANSNSSVLTLVESITDSGKNEGEELLTGEEEGETSIASVEDQLRKEMTIYEKFIMGMLTNFGSMALERIHNTLKMFCVADPSYDKSLQQLQSFLSGLVSEEKLEFRDGMYLLKK</sequence>
<protein>
    <recommendedName>
        <fullName>Anaphase-promoting complex subunit 2</fullName>
    </recommendedName>
    <alternativeName>
        <fullName>Cyclosome subunit 2</fullName>
    </alternativeName>
</protein>